<protein>
    <recommendedName>
        <fullName>Lipopolysaccharide biosynthesis protein WzxC</fullName>
    </recommendedName>
</protein>
<reference key="1">
    <citation type="journal article" date="1996" name="J. Bacteriol.">
        <title>Organization of the Escherichia coli K-12 gene cluster responsible for production of the extracellular polysaccharide colanic acid.</title>
        <authorList>
            <person name="Stevenson G."/>
            <person name="Andrianopoulos K."/>
            <person name="Hobbs M."/>
            <person name="Reeves P.R."/>
        </authorList>
    </citation>
    <scope>NUCLEOTIDE SEQUENCE [GENOMIC DNA]</scope>
    <source>
        <strain>K12</strain>
    </source>
</reference>
<reference key="2">
    <citation type="journal article" date="1996" name="DNA Res.">
        <title>A 460-kb DNA sequence of the Escherichia coli K-12 genome corresponding to the 40.1-50.0 min region on the linkage map.</title>
        <authorList>
            <person name="Itoh T."/>
            <person name="Aiba H."/>
            <person name="Baba T."/>
            <person name="Fujita K."/>
            <person name="Hayashi K."/>
            <person name="Inada T."/>
            <person name="Isono K."/>
            <person name="Kasai H."/>
            <person name="Kimura S."/>
            <person name="Kitakawa M."/>
            <person name="Kitagawa M."/>
            <person name="Makino K."/>
            <person name="Miki T."/>
            <person name="Mizobuchi K."/>
            <person name="Mori H."/>
            <person name="Mori T."/>
            <person name="Motomura K."/>
            <person name="Nakade S."/>
            <person name="Nakamura Y."/>
            <person name="Nashimoto H."/>
            <person name="Nishio Y."/>
            <person name="Oshima T."/>
            <person name="Saito N."/>
            <person name="Sampei G."/>
            <person name="Seki Y."/>
            <person name="Sivasundaram S."/>
            <person name="Tagami H."/>
            <person name="Takeda J."/>
            <person name="Takemoto K."/>
            <person name="Wada C."/>
            <person name="Yamamoto Y."/>
            <person name="Horiuchi T."/>
        </authorList>
    </citation>
    <scope>NUCLEOTIDE SEQUENCE [LARGE SCALE GENOMIC DNA]</scope>
    <source>
        <strain>K12 / W3110 / ATCC 27325 / DSM 5911</strain>
    </source>
</reference>
<reference key="3">
    <citation type="journal article" date="1997" name="Science">
        <title>The complete genome sequence of Escherichia coli K-12.</title>
        <authorList>
            <person name="Blattner F.R."/>
            <person name="Plunkett G. III"/>
            <person name="Bloch C.A."/>
            <person name="Perna N.T."/>
            <person name="Burland V."/>
            <person name="Riley M."/>
            <person name="Collado-Vides J."/>
            <person name="Glasner J.D."/>
            <person name="Rode C.K."/>
            <person name="Mayhew G.F."/>
            <person name="Gregor J."/>
            <person name="Davis N.W."/>
            <person name="Kirkpatrick H.A."/>
            <person name="Goeden M.A."/>
            <person name="Rose D.J."/>
            <person name="Mau B."/>
            <person name="Shao Y."/>
        </authorList>
    </citation>
    <scope>NUCLEOTIDE SEQUENCE [LARGE SCALE GENOMIC DNA]</scope>
    <source>
        <strain>K12 / MG1655 / ATCC 47076</strain>
    </source>
</reference>
<reference key="4">
    <citation type="journal article" date="2006" name="Mol. Syst. Biol.">
        <title>Highly accurate genome sequences of Escherichia coli K-12 strains MG1655 and W3110.</title>
        <authorList>
            <person name="Hayashi K."/>
            <person name="Morooka N."/>
            <person name="Yamamoto Y."/>
            <person name="Fujita K."/>
            <person name="Isono K."/>
            <person name="Choi S."/>
            <person name="Ohtsubo E."/>
            <person name="Baba T."/>
            <person name="Wanner B.L."/>
            <person name="Mori H."/>
            <person name="Horiuchi T."/>
        </authorList>
    </citation>
    <scope>NUCLEOTIDE SEQUENCE [LARGE SCALE GENOMIC DNA]</scope>
    <source>
        <strain>K12 / W3110 / ATCC 27325 / DSM 5911</strain>
    </source>
</reference>
<reference key="5">
    <citation type="journal article" date="2005" name="Science">
        <title>Global topology analysis of the Escherichia coli inner membrane proteome.</title>
        <authorList>
            <person name="Daley D.O."/>
            <person name="Rapp M."/>
            <person name="Granseth E."/>
            <person name="Melen K."/>
            <person name="Drew D."/>
            <person name="von Heijne G."/>
        </authorList>
    </citation>
    <scope>TOPOLOGY [LARGE SCALE ANALYSIS]</scope>
    <source>
        <strain>K12 / MG1655 / ATCC 47076</strain>
    </source>
</reference>
<organism>
    <name type="scientific">Escherichia coli (strain K12)</name>
    <dbReference type="NCBI Taxonomy" id="83333"/>
    <lineage>
        <taxon>Bacteria</taxon>
        <taxon>Pseudomonadati</taxon>
        <taxon>Pseudomonadota</taxon>
        <taxon>Gammaproteobacteria</taxon>
        <taxon>Enterobacterales</taxon>
        <taxon>Enterobacteriaceae</taxon>
        <taxon>Escherichia</taxon>
    </lineage>
</organism>
<sequence>MSLREKTISGAKWSAIATVIIIGLGLVQMTVLARIIDNHQFGLLTVSLVIIALADTLSDFGIANSIIQRKEISHLELTTLYWLNVGLGIVVCVAVFLLSDLIGDVLNNPDLAPLIKTLSLAFVVIPHGQQFRALMQKELEFNKIGMIETSAVLAGFTCTVVSAHFWPLAMTAILGYLVNSAVRTLLFGYFGRKIYRPGLHFSLASVAPNLRFGAWLTADSIINYLNTNLSTLVLARILGAGVAGGYNLAYNVAVVPPMKLNPIITRVLFPAFAKIQDDTEKLRVNFYKLLSVVGIINFPALLGLMVVSNNFVPLVFGEKWNSIIPVLQLLCVVGLLRSVGNPIGSLLMAKARVDISFKFNVFKTFLFIPAIVIGGQMAGAIGVTLGFLLVQIINTILSYFVMIKPVLGSSYRQYILSLWLPFYLSLPTLVVSYALGIVLKGQLALGMLLAVQIATGVLAFVVMIVLSRHPLVVEVKRQFCRSEKMKMLLRAG</sequence>
<evidence type="ECO:0000255" key="1"/>
<evidence type="ECO:0000305" key="2"/>
<proteinExistence type="evidence at protein level"/>
<comment type="pathway">
    <text>Bacterial outer membrane biogenesis; lipopolysaccharide biosynthesis.</text>
</comment>
<comment type="subcellular location">
    <subcellularLocation>
        <location>Cell inner membrane</location>
        <topology>Multi-pass membrane protein</topology>
    </subcellularLocation>
</comment>
<comment type="similarity">
    <text evidence="2">Belongs to the polysaccharide synthase family.</text>
</comment>
<keyword id="KW-0997">Cell inner membrane</keyword>
<keyword id="KW-1003">Cell membrane</keyword>
<keyword id="KW-0448">Lipopolysaccharide biosynthesis</keyword>
<keyword id="KW-0472">Membrane</keyword>
<keyword id="KW-1185">Reference proteome</keyword>
<keyword id="KW-0812">Transmembrane</keyword>
<keyword id="KW-1133">Transmembrane helix</keyword>
<gene>
    <name type="primary">wzxC</name>
    <name type="synonym">wzx</name>
    <name type="ordered locus">b2046</name>
    <name type="ordered locus">JW2031</name>
</gene>
<feature type="chain" id="PRO_0000166453" description="Lipopolysaccharide biosynthesis protein WzxC">
    <location>
        <begin position="1"/>
        <end position="492"/>
    </location>
</feature>
<feature type="topological domain" description="Cytoplasmic" evidence="1">
    <location>
        <begin position="1"/>
        <end position="12"/>
    </location>
</feature>
<feature type="transmembrane region" description="Helical" evidence="1">
    <location>
        <begin position="13"/>
        <end position="33"/>
    </location>
</feature>
<feature type="topological domain" description="Periplasmic" evidence="1">
    <location>
        <begin position="34"/>
        <end position="42"/>
    </location>
</feature>
<feature type="transmembrane region" description="Helical" evidence="1">
    <location>
        <begin position="43"/>
        <end position="63"/>
    </location>
</feature>
<feature type="topological domain" description="Cytoplasmic" evidence="1">
    <location>
        <begin position="64"/>
        <end position="81"/>
    </location>
</feature>
<feature type="transmembrane region" description="Helical" evidence="1">
    <location>
        <begin position="82"/>
        <end position="102"/>
    </location>
</feature>
<feature type="topological domain" description="Periplasmic" evidence="1">
    <location>
        <begin position="103"/>
        <end position="104"/>
    </location>
</feature>
<feature type="transmembrane region" description="Helical" evidence="1">
    <location>
        <begin position="105"/>
        <end position="125"/>
    </location>
</feature>
<feature type="topological domain" description="Cytoplasmic" evidence="1">
    <location>
        <begin position="126"/>
        <end position="157"/>
    </location>
</feature>
<feature type="transmembrane region" description="Helical" evidence="1">
    <location>
        <begin position="158"/>
        <end position="178"/>
    </location>
</feature>
<feature type="topological domain" description="Periplasmic" evidence="1">
    <location>
        <begin position="179"/>
        <end position="236"/>
    </location>
</feature>
<feature type="transmembrane region" description="Helical" evidence="1">
    <location>
        <begin position="237"/>
        <end position="257"/>
    </location>
</feature>
<feature type="topological domain" description="Cytoplasmic" evidence="1">
    <location>
        <begin position="258"/>
        <end position="288"/>
    </location>
</feature>
<feature type="transmembrane region" description="Helical" evidence="1">
    <location>
        <begin position="289"/>
        <end position="309"/>
    </location>
</feature>
<feature type="topological domain" description="Periplasmic" evidence="1">
    <location>
        <begin position="310"/>
        <end position="322"/>
    </location>
</feature>
<feature type="transmembrane region" description="Helical" evidence="1">
    <location>
        <begin position="323"/>
        <end position="343"/>
    </location>
</feature>
<feature type="topological domain" description="Cytoplasmic" evidence="1">
    <location>
        <begin position="344"/>
        <end position="364"/>
    </location>
</feature>
<feature type="transmembrane region" description="Helical" evidence="1">
    <location>
        <begin position="365"/>
        <end position="385"/>
    </location>
</feature>
<feature type="topological domain" description="Periplasmic" evidence="1">
    <location>
        <position position="386"/>
    </location>
</feature>
<feature type="transmembrane region" description="Helical" evidence="1">
    <location>
        <begin position="387"/>
        <end position="407"/>
    </location>
</feature>
<feature type="topological domain" description="Cytoplasmic" evidence="1">
    <location>
        <begin position="408"/>
        <end position="417"/>
    </location>
</feature>
<feature type="transmembrane region" description="Helical" evidence="1">
    <location>
        <begin position="418"/>
        <end position="438"/>
    </location>
</feature>
<feature type="topological domain" description="Periplasmic" evidence="1">
    <location>
        <begin position="439"/>
        <end position="445"/>
    </location>
</feature>
<feature type="transmembrane region" description="Helical" evidence="1">
    <location>
        <begin position="446"/>
        <end position="466"/>
    </location>
</feature>
<feature type="topological domain" description="Cytoplasmic" evidence="1">
    <location>
        <begin position="467"/>
        <end position="492"/>
    </location>
</feature>
<accession>P77377</accession>
<accession>O08001</accession>
<accession>O08002</accession>
<dbReference type="EMBL" id="U38473">
    <property type="protein sequence ID" value="AAC77849.1"/>
    <property type="molecule type" value="Genomic_DNA"/>
</dbReference>
<dbReference type="EMBL" id="U00096">
    <property type="protein sequence ID" value="AAC75107.1"/>
    <property type="molecule type" value="Genomic_DNA"/>
</dbReference>
<dbReference type="EMBL" id="AP009048">
    <property type="protein sequence ID" value="BAA15899.1"/>
    <property type="molecule type" value="Genomic_DNA"/>
</dbReference>
<dbReference type="PIR" id="E64970">
    <property type="entry name" value="E64970"/>
</dbReference>
<dbReference type="RefSeq" id="NP_416550.1">
    <property type="nucleotide sequence ID" value="NC_000913.3"/>
</dbReference>
<dbReference type="RefSeq" id="WP_000058424.1">
    <property type="nucleotide sequence ID" value="NZ_LN832404.1"/>
</dbReference>
<dbReference type="SMR" id="P77377"/>
<dbReference type="BioGRID" id="4263313">
    <property type="interactions" value="412"/>
</dbReference>
<dbReference type="DIP" id="DIP-11136N"/>
<dbReference type="FunCoup" id="P77377">
    <property type="interactions" value="187"/>
</dbReference>
<dbReference type="IntAct" id="P77377">
    <property type="interactions" value="1"/>
</dbReference>
<dbReference type="STRING" id="511145.b2046"/>
<dbReference type="TCDB" id="2.A.66.2.7">
    <property type="family name" value="the multidrug/oligosaccharidyl-lipid/polysaccharide (mop) flippase superfamily"/>
</dbReference>
<dbReference type="PaxDb" id="511145-b2046"/>
<dbReference type="EnsemblBacteria" id="AAC75107">
    <property type="protein sequence ID" value="AAC75107"/>
    <property type="gene ID" value="b2046"/>
</dbReference>
<dbReference type="GeneID" id="946581"/>
<dbReference type="KEGG" id="ecj:JW2031"/>
<dbReference type="KEGG" id="eco:b2046"/>
<dbReference type="KEGG" id="ecoc:C3026_11520"/>
<dbReference type="PATRIC" id="fig|1411691.4.peg.205"/>
<dbReference type="EchoBASE" id="EB3346"/>
<dbReference type="eggNOG" id="COG2244">
    <property type="taxonomic scope" value="Bacteria"/>
</dbReference>
<dbReference type="HOGENOM" id="CLU_026911_2_1_6"/>
<dbReference type="InParanoid" id="P77377"/>
<dbReference type="OMA" id="DLAFYWD"/>
<dbReference type="OrthoDB" id="8538786at2"/>
<dbReference type="PhylomeDB" id="P77377"/>
<dbReference type="BioCyc" id="EcoCyc:G7097-MONOMER"/>
<dbReference type="BioCyc" id="MetaCyc:G7097-MONOMER"/>
<dbReference type="UniPathway" id="UPA00030"/>
<dbReference type="PRO" id="PR:P77377"/>
<dbReference type="Proteomes" id="UP000000625">
    <property type="component" value="Chromosome"/>
</dbReference>
<dbReference type="GO" id="GO:0005886">
    <property type="term" value="C:plasma membrane"/>
    <property type="evidence" value="ECO:0000314"/>
    <property type="project" value="EcoCyc"/>
</dbReference>
<dbReference type="GO" id="GO:0009242">
    <property type="term" value="P:colanic acid biosynthetic process"/>
    <property type="evidence" value="ECO:0000315"/>
    <property type="project" value="EcoCyc"/>
</dbReference>
<dbReference type="GO" id="GO:0009103">
    <property type="term" value="P:lipopolysaccharide biosynthetic process"/>
    <property type="evidence" value="ECO:0007669"/>
    <property type="project" value="UniProtKB-UniPathway"/>
</dbReference>
<dbReference type="CDD" id="cd13127">
    <property type="entry name" value="MATE_tuaB_like"/>
    <property type="match status" value="1"/>
</dbReference>
<dbReference type="InterPro" id="IPR050833">
    <property type="entry name" value="Poly_Biosynth_Transport"/>
</dbReference>
<dbReference type="InterPro" id="IPR002797">
    <property type="entry name" value="Polysacc_synth"/>
</dbReference>
<dbReference type="NCBIfam" id="NF007773">
    <property type="entry name" value="PRK10459.1"/>
    <property type="match status" value="1"/>
</dbReference>
<dbReference type="PANTHER" id="PTHR30250:SF10">
    <property type="entry name" value="LIPOPOLYSACCHARIDE BIOSYNTHESIS PROTEIN WZXC"/>
    <property type="match status" value="1"/>
</dbReference>
<dbReference type="PANTHER" id="PTHR30250">
    <property type="entry name" value="PST FAMILY PREDICTED COLANIC ACID TRANSPORTER"/>
    <property type="match status" value="1"/>
</dbReference>
<dbReference type="Pfam" id="PF01943">
    <property type="entry name" value="Polysacc_synt"/>
    <property type="match status" value="1"/>
</dbReference>
<name>WZXC_ECOLI</name>